<name>C71D7_SOLCH</name>
<dbReference type="EC" id="1.14.-.-"/>
<dbReference type="EMBL" id="U48435">
    <property type="protein sequence ID" value="AAB61965.1"/>
    <property type="molecule type" value="Genomic_DNA"/>
</dbReference>
<dbReference type="PIR" id="T10499">
    <property type="entry name" value="T10499"/>
</dbReference>
<dbReference type="SMR" id="P93531"/>
<dbReference type="GO" id="GO:0020037">
    <property type="term" value="F:heme binding"/>
    <property type="evidence" value="ECO:0007669"/>
    <property type="project" value="InterPro"/>
</dbReference>
<dbReference type="GO" id="GO:0005506">
    <property type="term" value="F:iron ion binding"/>
    <property type="evidence" value="ECO:0007669"/>
    <property type="project" value="InterPro"/>
</dbReference>
<dbReference type="GO" id="GO:0004497">
    <property type="term" value="F:monooxygenase activity"/>
    <property type="evidence" value="ECO:0007669"/>
    <property type="project" value="UniProtKB-KW"/>
</dbReference>
<dbReference type="GO" id="GO:0016705">
    <property type="term" value="F:oxidoreductase activity, acting on paired donors, with incorporation or reduction of molecular oxygen"/>
    <property type="evidence" value="ECO:0007669"/>
    <property type="project" value="InterPro"/>
</dbReference>
<dbReference type="CDD" id="cd11072">
    <property type="entry name" value="CYP71-like"/>
    <property type="match status" value="1"/>
</dbReference>
<dbReference type="FunFam" id="1.10.630.10:FF:000008">
    <property type="entry name" value="Cytochrome P450 71D8"/>
    <property type="match status" value="1"/>
</dbReference>
<dbReference type="Gene3D" id="1.10.630.10">
    <property type="entry name" value="Cytochrome P450"/>
    <property type="match status" value="1"/>
</dbReference>
<dbReference type="InterPro" id="IPR052306">
    <property type="entry name" value="CYP450_71D"/>
</dbReference>
<dbReference type="InterPro" id="IPR001128">
    <property type="entry name" value="Cyt_P450"/>
</dbReference>
<dbReference type="InterPro" id="IPR017972">
    <property type="entry name" value="Cyt_P450_CS"/>
</dbReference>
<dbReference type="InterPro" id="IPR002401">
    <property type="entry name" value="Cyt_P450_E_grp-I"/>
</dbReference>
<dbReference type="InterPro" id="IPR036396">
    <property type="entry name" value="Cyt_P450_sf"/>
</dbReference>
<dbReference type="PANTHER" id="PTHR47953:SF17">
    <property type="entry name" value="CYTOCHROME P450"/>
    <property type="match status" value="1"/>
</dbReference>
<dbReference type="PANTHER" id="PTHR47953">
    <property type="entry name" value="OS08G0105600 PROTEIN"/>
    <property type="match status" value="1"/>
</dbReference>
<dbReference type="Pfam" id="PF00067">
    <property type="entry name" value="p450"/>
    <property type="match status" value="1"/>
</dbReference>
<dbReference type="PRINTS" id="PR00463">
    <property type="entry name" value="EP450I"/>
</dbReference>
<dbReference type="PRINTS" id="PR00385">
    <property type="entry name" value="P450"/>
</dbReference>
<dbReference type="SUPFAM" id="SSF48264">
    <property type="entry name" value="Cytochrome P450"/>
    <property type="match status" value="1"/>
</dbReference>
<dbReference type="PROSITE" id="PS00086">
    <property type="entry name" value="CYTOCHROME_P450"/>
    <property type="match status" value="1"/>
</dbReference>
<evidence type="ECO:0000250" key="1"/>
<evidence type="ECO:0000305" key="2"/>
<feature type="chain" id="PRO_0000052118" description="Cytochrome P450 71D7">
    <location>
        <begin position="1"/>
        <end position="500"/>
    </location>
</feature>
<feature type="binding site" description="axial binding residue" evidence="1">
    <location>
        <position position="441"/>
    </location>
    <ligand>
        <name>heme</name>
        <dbReference type="ChEBI" id="CHEBI:30413"/>
    </ligand>
    <ligandPart>
        <name>Fe</name>
        <dbReference type="ChEBI" id="CHEBI:18248"/>
    </ligandPart>
</feature>
<keyword id="KW-0349">Heme</keyword>
<keyword id="KW-0408">Iron</keyword>
<keyword id="KW-0479">Metal-binding</keyword>
<keyword id="KW-0503">Monooxygenase</keyword>
<keyword id="KW-0560">Oxidoreductase</keyword>
<protein>
    <recommendedName>
        <fullName>Cytochrome P450 71D7</fullName>
        <ecNumber>1.14.-.-</ecNumber>
    </recommendedName>
</protein>
<gene>
    <name type="primary">CYP71D7</name>
</gene>
<accession>P93531</accession>
<comment type="cofactor">
    <cofactor evidence="1">
        <name>heme</name>
        <dbReference type="ChEBI" id="CHEBI:30413"/>
    </cofactor>
</comment>
<comment type="similarity">
    <text evidence="2">Belongs to the cytochrome P450 family.</text>
</comment>
<reference key="1">
    <citation type="journal article" date="1997" name="Gene">
        <title>Isolation and sequence analysis of a cDNA and a related gene for cytochrome P450 proteins from Solanum chacoense.</title>
        <authorList>
            <person name="Hutvagner G."/>
            <person name="Barta E."/>
            <person name="Banfalvi Z."/>
        </authorList>
    </citation>
    <scope>NUCLEOTIDE SEQUENCE [GENOMIC DNA]</scope>
    <source>
        <strain>cv. PI 320 287</strain>
        <tissue>Leaf</tissue>
    </source>
</reference>
<organism>
    <name type="scientific">Solanum chacoense</name>
    <name type="common">Chaco potato</name>
    <dbReference type="NCBI Taxonomy" id="4108"/>
    <lineage>
        <taxon>Eukaryota</taxon>
        <taxon>Viridiplantae</taxon>
        <taxon>Streptophyta</taxon>
        <taxon>Embryophyta</taxon>
        <taxon>Tracheophyta</taxon>
        <taxon>Spermatophyta</taxon>
        <taxon>Magnoliopsida</taxon>
        <taxon>eudicotyledons</taxon>
        <taxon>Gunneridae</taxon>
        <taxon>Pentapetalae</taxon>
        <taxon>asterids</taxon>
        <taxon>lamiids</taxon>
        <taxon>Solanales</taxon>
        <taxon>Solanaceae</taxon>
        <taxon>Solanoideae</taxon>
        <taxon>Solaneae</taxon>
        <taxon>Solanum</taxon>
    </lineage>
</organism>
<sequence length="500" mass="56824">MQLVSIFLFISFLFLLRKWKKYLNNSQTKKLPPGPWKLPFIGGMHHLAGGLPHRVLRDLAEKYGPLMHLQLGEVSAVVVTSPEMAKQVLKTHDIAFASRPKLLAMDIICYNRRDIAFSPYGDYWRQMRKICIMEVLSAKSVRSFSSIRHDEVVRLIDSIQPCFTSGELVNFTERIIWFTSSMTCRSAFGQVLKEQEVFIKLIREVISLAEGFDVADIFPSYKFLHGFGGAKQKLLNAHRKVDSIVEDVIKEHKKNLATRKSDDAIGGEDLVDALVRLMNDKSLQFPINNDNIKAVIIDLFAAGTETSSTTTVWAMAEMLKNPSVFAKAQAKVREAFRDKVTFDENDVEELKYLKLVIKETMRLHAPVPLLVPRECREETEINGYTIPVKTKVMVNVWALGRDPKYWDDAESFKPERFEQCSIDFIGNNFEYLPFGGGRRICPGISFGLANVYLPLAQLLYHFDWKLPTGMEPKDLDLTESAGITAARKGDLYLIATPHQP</sequence>
<proteinExistence type="inferred from homology"/>